<reference evidence="5" key="1">
    <citation type="journal article" date="2009" name="BMC Evol. Biol.">
        <title>A proteomic approach for studying insect phylogeny: CAPA peptides of ancient insect taxa (Dictyoptera, Blattoptera) as a test case.</title>
        <authorList>
            <person name="Roth S."/>
            <person name="Fromm B."/>
            <person name="Gaede G."/>
            <person name="Predel R."/>
        </authorList>
    </citation>
    <scope>PROTEIN SEQUENCE</scope>
    <scope>PYROGLUTAMATE FORMATION AT GLN-1</scope>
    <scope>AMIDATION AT THR-10</scope>
    <source>
        <tissue evidence="3">Corpora cardiaca</tissue>
    </source>
</reference>
<accession>P85664</accession>
<protein>
    <recommendedName>
        <fullName evidence="1">Hypertrehalosaemic factor</fullName>
    </recommendedName>
    <alternativeName>
        <fullName evidence="4">Adipokinetic hormone 1</fullName>
        <shortName evidence="4">LucGr-AKH-1</shortName>
    </alternativeName>
    <alternativeName>
        <fullName evidence="1">Hypertrehalosaemic neuropeptide</fullName>
    </alternativeName>
</protein>
<evidence type="ECO:0000250" key="1">
    <source>
        <dbReference type="UniProtKB" id="P67790"/>
    </source>
</evidence>
<evidence type="ECO:0000255" key="2"/>
<evidence type="ECO:0000269" key="3">
    <source>
    </source>
</evidence>
<evidence type="ECO:0000303" key="4">
    <source>
    </source>
</evidence>
<evidence type="ECO:0000305" key="5"/>
<organism>
    <name type="scientific">Lucihormetica grossei</name>
    <name type="common">Cockroach</name>
    <dbReference type="NCBI Taxonomy" id="521513"/>
    <lineage>
        <taxon>Eukaryota</taxon>
        <taxon>Metazoa</taxon>
        <taxon>Ecdysozoa</taxon>
        <taxon>Arthropoda</taxon>
        <taxon>Hexapoda</taxon>
        <taxon>Insecta</taxon>
        <taxon>Pterygota</taxon>
        <taxon>Neoptera</taxon>
        <taxon>Polyneoptera</taxon>
        <taxon>Dictyoptera</taxon>
        <taxon>Blattodea</taxon>
        <taxon>Blaberoidea</taxon>
        <taxon>Blaberidae</taxon>
        <taxon>Blaberinae</taxon>
        <taxon>Lucihormetica</taxon>
    </lineage>
</organism>
<dbReference type="GO" id="GO:0005576">
    <property type="term" value="C:extracellular region"/>
    <property type="evidence" value="ECO:0007669"/>
    <property type="project" value="UniProtKB-SubCell"/>
</dbReference>
<dbReference type="GO" id="GO:0005179">
    <property type="term" value="F:hormone activity"/>
    <property type="evidence" value="ECO:0007669"/>
    <property type="project" value="UniProtKB-KW"/>
</dbReference>
<dbReference type="GO" id="GO:0007218">
    <property type="term" value="P:neuropeptide signaling pathway"/>
    <property type="evidence" value="ECO:0007669"/>
    <property type="project" value="UniProtKB-KW"/>
</dbReference>
<dbReference type="InterPro" id="IPR002047">
    <property type="entry name" value="Adipokinetic_hormone_CS"/>
</dbReference>
<dbReference type="PROSITE" id="PS00256">
    <property type="entry name" value="AKH"/>
    <property type="match status" value="1"/>
</dbReference>
<sequence>QVNFSPGWGT</sequence>
<keyword id="KW-0027">Amidation</keyword>
<keyword id="KW-0903">Direct protein sequencing</keyword>
<keyword id="KW-0372">Hormone</keyword>
<keyword id="KW-0527">Neuropeptide</keyword>
<keyword id="KW-0873">Pyrrolidone carboxylic acid</keyword>
<keyword id="KW-0964">Secreted</keyword>
<name>HTF_LUCGR</name>
<comment type="function">
    <text evidence="5">Hypertrehalosaemic factors are neuropeptides that elevate the level of trehalose in the hemolymph (trehalose is the major carbohydrate in the hemolymph of insects).</text>
</comment>
<comment type="subcellular location">
    <subcellularLocation>
        <location evidence="5">Secreted</location>
    </subcellularLocation>
</comment>
<comment type="similarity">
    <text evidence="2">Belongs to the AKH/HRTH/RPCH family.</text>
</comment>
<proteinExistence type="evidence at protein level"/>
<feature type="peptide" id="PRO_0000378654" description="Hypertrehalosaemic factor" evidence="3">
    <location>
        <begin position="1"/>
        <end position="10"/>
    </location>
</feature>
<feature type="modified residue" description="Pyrrolidone carboxylic acid" evidence="3">
    <location>
        <position position="1"/>
    </location>
</feature>
<feature type="modified residue" description="Threonine amide" evidence="3">
    <location>
        <position position="10"/>
    </location>
</feature>